<accession>A4WRW9</accession>
<reference key="1">
    <citation type="submission" date="2007-04" db="EMBL/GenBank/DDBJ databases">
        <title>Complete sequence of chromosome of Rhodobacter sphaeroides ATCC 17025.</title>
        <authorList>
            <consortium name="US DOE Joint Genome Institute"/>
            <person name="Copeland A."/>
            <person name="Lucas S."/>
            <person name="Lapidus A."/>
            <person name="Barry K."/>
            <person name="Detter J.C."/>
            <person name="Glavina del Rio T."/>
            <person name="Hammon N."/>
            <person name="Israni S."/>
            <person name="Dalin E."/>
            <person name="Tice H."/>
            <person name="Pitluck S."/>
            <person name="Chertkov O."/>
            <person name="Brettin T."/>
            <person name="Bruce D."/>
            <person name="Han C."/>
            <person name="Schmutz J."/>
            <person name="Larimer F."/>
            <person name="Land M."/>
            <person name="Hauser L."/>
            <person name="Kyrpides N."/>
            <person name="Kim E."/>
            <person name="Richardson P."/>
            <person name="Mackenzie C."/>
            <person name="Choudhary M."/>
            <person name="Donohue T.J."/>
            <person name="Kaplan S."/>
        </authorList>
    </citation>
    <scope>NUCLEOTIDE SEQUENCE [LARGE SCALE GENOMIC DNA]</scope>
    <source>
        <strain>ATCC 17025 / ATH 2.4.3</strain>
    </source>
</reference>
<feature type="chain" id="PRO_1000020929" description="Protease HtpX homolog">
    <location>
        <begin position="1"/>
        <end position="299"/>
    </location>
</feature>
<feature type="transmembrane region" description="Helical" evidence="1">
    <location>
        <begin position="7"/>
        <end position="24"/>
    </location>
</feature>
<feature type="transmembrane region" description="Helical" evidence="1">
    <location>
        <begin position="29"/>
        <end position="46"/>
    </location>
</feature>
<feature type="transmembrane region" description="Helical" evidence="1">
    <location>
        <begin position="145"/>
        <end position="165"/>
    </location>
</feature>
<feature type="transmembrane region" description="Helical" evidence="1">
    <location>
        <begin position="174"/>
        <end position="194"/>
    </location>
</feature>
<feature type="active site" evidence="1">
    <location>
        <position position="131"/>
    </location>
</feature>
<feature type="binding site" evidence="1">
    <location>
        <position position="130"/>
    </location>
    <ligand>
        <name>Zn(2+)</name>
        <dbReference type="ChEBI" id="CHEBI:29105"/>
        <note>catalytic</note>
    </ligand>
</feature>
<feature type="binding site" evidence="1">
    <location>
        <position position="134"/>
    </location>
    <ligand>
        <name>Zn(2+)</name>
        <dbReference type="ChEBI" id="CHEBI:29105"/>
        <note>catalytic</note>
    </ligand>
</feature>
<feature type="binding site" evidence="1">
    <location>
        <position position="203"/>
    </location>
    <ligand>
        <name>Zn(2+)</name>
        <dbReference type="ChEBI" id="CHEBI:29105"/>
        <note>catalytic</note>
    </ligand>
</feature>
<sequence>MGYVRTGILMAVMTALFLGVGALIGGQSGAIIALIVAALMNLFTFWNSDKAVLSMHGAHEVDPRAAPDLHAMVRGLAERAGMPMPRLYLIETDQPNAFATGRNPENAAVAVTRGLLRALSPEEVAGVVAHELAHIKNRDTLLMTVTATFAGAISMLANFAFFFGGGSNQEGERPVGIVGTLALMILAPLAAGLVQMAISRSREYEADRIGAEICGRPLWLASALGKIEGLARRIDNTRAERNPATAHMFIINPLHAMSHDRLFATHPNTANRIAALQAMAGAGVERSSMPRVPRRGPWR</sequence>
<dbReference type="EC" id="3.4.24.-" evidence="1"/>
<dbReference type="EMBL" id="CP000661">
    <property type="protein sequence ID" value="ABP70133.1"/>
    <property type="molecule type" value="Genomic_DNA"/>
</dbReference>
<dbReference type="STRING" id="349102.Rsph17025_1232"/>
<dbReference type="KEGG" id="rsq:Rsph17025_1232"/>
<dbReference type="eggNOG" id="COG0501">
    <property type="taxonomic scope" value="Bacteria"/>
</dbReference>
<dbReference type="HOGENOM" id="CLU_042266_3_0_5"/>
<dbReference type="BioCyc" id="RSPH349102:G1G8M-1260-MONOMER"/>
<dbReference type="GO" id="GO:0005886">
    <property type="term" value="C:plasma membrane"/>
    <property type="evidence" value="ECO:0007669"/>
    <property type="project" value="UniProtKB-SubCell"/>
</dbReference>
<dbReference type="GO" id="GO:0004222">
    <property type="term" value="F:metalloendopeptidase activity"/>
    <property type="evidence" value="ECO:0007669"/>
    <property type="project" value="UniProtKB-UniRule"/>
</dbReference>
<dbReference type="GO" id="GO:0008270">
    <property type="term" value="F:zinc ion binding"/>
    <property type="evidence" value="ECO:0007669"/>
    <property type="project" value="UniProtKB-UniRule"/>
</dbReference>
<dbReference type="GO" id="GO:0006508">
    <property type="term" value="P:proteolysis"/>
    <property type="evidence" value="ECO:0007669"/>
    <property type="project" value="UniProtKB-KW"/>
</dbReference>
<dbReference type="CDD" id="cd07336">
    <property type="entry name" value="M48B_HtpX_like"/>
    <property type="match status" value="1"/>
</dbReference>
<dbReference type="Gene3D" id="3.30.2010.10">
    <property type="entry name" value="Metalloproteases ('zincins'), catalytic domain"/>
    <property type="match status" value="1"/>
</dbReference>
<dbReference type="HAMAP" id="MF_00188">
    <property type="entry name" value="Pept_M48_protease_HtpX"/>
    <property type="match status" value="1"/>
</dbReference>
<dbReference type="InterPro" id="IPR050083">
    <property type="entry name" value="HtpX_protease"/>
</dbReference>
<dbReference type="InterPro" id="IPR022919">
    <property type="entry name" value="Pept_M48_protease_HtpX"/>
</dbReference>
<dbReference type="InterPro" id="IPR001915">
    <property type="entry name" value="Peptidase_M48"/>
</dbReference>
<dbReference type="NCBIfam" id="NF002363">
    <property type="entry name" value="PRK01345.1"/>
    <property type="match status" value="1"/>
</dbReference>
<dbReference type="NCBIfam" id="NF002826">
    <property type="entry name" value="PRK03001.1"/>
    <property type="match status" value="1"/>
</dbReference>
<dbReference type="PANTHER" id="PTHR43221">
    <property type="entry name" value="PROTEASE HTPX"/>
    <property type="match status" value="1"/>
</dbReference>
<dbReference type="PANTHER" id="PTHR43221:SF1">
    <property type="entry name" value="PROTEASE HTPX"/>
    <property type="match status" value="1"/>
</dbReference>
<dbReference type="Pfam" id="PF01435">
    <property type="entry name" value="Peptidase_M48"/>
    <property type="match status" value="1"/>
</dbReference>
<name>HTPX_CERS5</name>
<comment type="cofactor">
    <cofactor evidence="1">
        <name>Zn(2+)</name>
        <dbReference type="ChEBI" id="CHEBI:29105"/>
    </cofactor>
    <text evidence="1">Binds 1 zinc ion per subunit.</text>
</comment>
<comment type="subcellular location">
    <subcellularLocation>
        <location evidence="1">Cell inner membrane</location>
        <topology evidence="1">Multi-pass membrane protein</topology>
    </subcellularLocation>
</comment>
<comment type="similarity">
    <text evidence="1">Belongs to the peptidase M48B family.</text>
</comment>
<gene>
    <name evidence="1" type="primary">htpX</name>
    <name type="ordered locus">Rsph17025_1232</name>
</gene>
<evidence type="ECO:0000255" key="1">
    <source>
        <dbReference type="HAMAP-Rule" id="MF_00188"/>
    </source>
</evidence>
<proteinExistence type="inferred from homology"/>
<organism>
    <name type="scientific">Cereibacter sphaeroides (strain ATCC 17025 / ATH 2.4.3)</name>
    <name type="common">Rhodobacter sphaeroides</name>
    <dbReference type="NCBI Taxonomy" id="349102"/>
    <lineage>
        <taxon>Bacteria</taxon>
        <taxon>Pseudomonadati</taxon>
        <taxon>Pseudomonadota</taxon>
        <taxon>Alphaproteobacteria</taxon>
        <taxon>Rhodobacterales</taxon>
        <taxon>Paracoccaceae</taxon>
        <taxon>Cereibacter</taxon>
    </lineage>
</organism>
<keyword id="KW-0997">Cell inner membrane</keyword>
<keyword id="KW-1003">Cell membrane</keyword>
<keyword id="KW-0378">Hydrolase</keyword>
<keyword id="KW-0472">Membrane</keyword>
<keyword id="KW-0479">Metal-binding</keyword>
<keyword id="KW-0482">Metalloprotease</keyword>
<keyword id="KW-0645">Protease</keyword>
<keyword id="KW-0812">Transmembrane</keyword>
<keyword id="KW-1133">Transmembrane helix</keyword>
<keyword id="KW-0862">Zinc</keyword>
<protein>
    <recommendedName>
        <fullName evidence="1">Protease HtpX homolog</fullName>
        <ecNumber evidence="1">3.4.24.-</ecNumber>
    </recommendedName>
</protein>